<protein>
    <recommendedName>
        <fullName evidence="1">Fluoride-specific ion channel FluC 3</fullName>
    </recommendedName>
</protein>
<accession>Q578U1</accession>
<organism>
    <name type="scientific">Brucella abortus biovar 1 (strain 9-941)</name>
    <dbReference type="NCBI Taxonomy" id="262698"/>
    <lineage>
        <taxon>Bacteria</taxon>
        <taxon>Pseudomonadati</taxon>
        <taxon>Pseudomonadota</taxon>
        <taxon>Alphaproteobacteria</taxon>
        <taxon>Hyphomicrobiales</taxon>
        <taxon>Brucellaceae</taxon>
        <taxon>Brucella/Ochrobactrum group</taxon>
        <taxon>Brucella</taxon>
    </lineage>
</organism>
<keyword id="KW-0997">Cell inner membrane</keyword>
<keyword id="KW-1003">Cell membrane</keyword>
<keyword id="KW-0407">Ion channel</keyword>
<keyword id="KW-0406">Ion transport</keyword>
<keyword id="KW-0472">Membrane</keyword>
<keyword id="KW-0479">Metal-binding</keyword>
<keyword id="KW-0915">Sodium</keyword>
<keyword id="KW-0812">Transmembrane</keyword>
<keyword id="KW-1133">Transmembrane helix</keyword>
<keyword id="KW-0813">Transport</keyword>
<name>FLUC3_BRUAB</name>
<gene>
    <name evidence="1" type="primary">fluC3</name>
    <name evidence="1" type="synonym">crcB3</name>
    <name type="ordered locus">BruAb2_0414</name>
</gene>
<evidence type="ECO:0000255" key="1">
    <source>
        <dbReference type="HAMAP-Rule" id="MF_00454"/>
    </source>
</evidence>
<proteinExistence type="inferred from homology"/>
<feature type="chain" id="PRO_0000110069" description="Fluoride-specific ion channel FluC 3">
    <location>
        <begin position="1"/>
        <end position="137"/>
    </location>
</feature>
<feature type="transmembrane region" description="Helical" evidence="1">
    <location>
        <begin position="20"/>
        <end position="40"/>
    </location>
</feature>
<feature type="transmembrane region" description="Helical" evidence="1">
    <location>
        <begin position="43"/>
        <end position="63"/>
    </location>
</feature>
<feature type="transmembrane region" description="Helical" evidence="1">
    <location>
        <begin position="83"/>
        <end position="103"/>
    </location>
</feature>
<feature type="transmembrane region" description="Helical" evidence="1">
    <location>
        <begin position="110"/>
        <end position="130"/>
    </location>
</feature>
<feature type="binding site" evidence="1">
    <location>
        <position position="86"/>
    </location>
    <ligand>
        <name>Na(+)</name>
        <dbReference type="ChEBI" id="CHEBI:29101"/>
        <note>structural</note>
    </ligand>
</feature>
<feature type="binding site" evidence="1">
    <location>
        <position position="89"/>
    </location>
    <ligand>
        <name>Na(+)</name>
        <dbReference type="ChEBI" id="CHEBI:29101"/>
        <note>structural</note>
    </ligand>
</feature>
<dbReference type="EMBL" id="AE017224">
    <property type="protein sequence ID" value="AAX75843.1"/>
    <property type="molecule type" value="Genomic_DNA"/>
</dbReference>
<dbReference type="SMR" id="Q578U1"/>
<dbReference type="EnsemblBacteria" id="AAX75843">
    <property type="protein sequence ID" value="AAX75843"/>
    <property type="gene ID" value="BruAb2_0414"/>
</dbReference>
<dbReference type="KEGG" id="bmb:BruAb2_0414"/>
<dbReference type="HOGENOM" id="CLU_114342_3_0_5"/>
<dbReference type="Proteomes" id="UP000000540">
    <property type="component" value="Chromosome II"/>
</dbReference>
<dbReference type="GO" id="GO:0005886">
    <property type="term" value="C:plasma membrane"/>
    <property type="evidence" value="ECO:0007669"/>
    <property type="project" value="UniProtKB-SubCell"/>
</dbReference>
<dbReference type="GO" id="GO:0062054">
    <property type="term" value="F:fluoride channel activity"/>
    <property type="evidence" value="ECO:0007669"/>
    <property type="project" value="UniProtKB-UniRule"/>
</dbReference>
<dbReference type="GO" id="GO:0046872">
    <property type="term" value="F:metal ion binding"/>
    <property type="evidence" value="ECO:0007669"/>
    <property type="project" value="UniProtKB-KW"/>
</dbReference>
<dbReference type="GO" id="GO:0140114">
    <property type="term" value="P:cellular detoxification of fluoride"/>
    <property type="evidence" value="ECO:0007669"/>
    <property type="project" value="UniProtKB-UniRule"/>
</dbReference>
<dbReference type="HAMAP" id="MF_00454">
    <property type="entry name" value="FluC"/>
    <property type="match status" value="1"/>
</dbReference>
<dbReference type="InterPro" id="IPR003691">
    <property type="entry name" value="FluC"/>
</dbReference>
<dbReference type="NCBIfam" id="NF010821">
    <property type="entry name" value="PRK14225.1"/>
    <property type="match status" value="1"/>
</dbReference>
<dbReference type="Pfam" id="PF02537">
    <property type="entry name" value="CRCB"/>
    <property type="match status" value="1"/>
</dbReference>
<reference key="1">
    <citation type="journal article" date="2005" name="J. Bacteriol.">
        <title>Completion of the genome sequence of Brucella abortus and comparison to the highly similar genomes of Brucella melitensis and Brucella suis.</title>
        <authorList>
            <person name="Halling S.M."/>
            <person name="Peterson-Burch B.D."/>
            <person name="Bricker B.J."/>
            <person name="Zuerner R.L."/>
            <person name="Qing Z."/>
            <person name="Li L.-L."/>
            <person name="Kapur V."/>
            <person name="Alt D.P."/>
            <person name="Olsen S.C."/>
        </authorList>
    </citation>
    <scope>NUCLEOTIDE SEQUENCE [LARGE SCALE GENOMIC DNA]</scope>
    <source>
        <strain>9-941</strain>
    </source>
</reference>
<comment type="function">
    <text evidence="1">Fluoride-specific ion channel. Important for reducing fluoride concentration in the cell, thus reducing its toxicity.</text>
</comment>
<comment type="catalytic activity">
    <reaction evidence="1">
        <text>fluoride(in) = fluoride(out)</text>
        <dbReference type="Rhea" id="RHEA:76159"/>
        <dbReference type="ChEBI" id="CHEBI:17051"/>
    </reaction>
    <physiologicalReaction direction="left-to-right" evidence="1">
        <dbReference type="Rhea" id="RHEA:76160"/>
    </physiologicalReaction>
</comment>
<comment type="activity regulation">
    <text evidence="1">Na(+) is not transported, but it plays an essential structural role and its presence is essential for fluoride channel function.</text>
</comment>
<comment type="subcellular location">
    <subcellularLocation>
        <location evidence="1">Cell inner membrane</location>
        <topology evidence="1">Multi-pass membrane protein</topology>
    </subcellularLocation>
</comment>
<comment type="similarity">
    <text evidence="1">Belongs to the fluoride channel Fluc/FEX (TC 1.A.43) family.</text>
</comment>
<sequence length="137" mass="14745">MRNWRQAENIRLYIAVGCGAAIGALLRFLSGWVIVAILGANPLWGTSFVNIVGSFIIMFFATLTGPEGRWLVSPAWRQFVMGGLCGGLTTFSSMSLDTFLLVLHGNAAFALAYLCGLVFLSLSAAMLGLIAAQRINR</sequence>